<comment type="function">
    <text evidence="3 8 9 10 11 12">Required for correct functioning of the GINS complex, a complex that plays an essential role in the initiation of DNA replication, and progression of DNA replication forks (PubMed:17417653, PubMed:28414293). GINS complex is a core component of CDC45-MCM-GINS (CMG) helicase, the molecular machine that unwinds template DNA during replication, and around which the replisome is built (PubMed:32453425, PubMed:34694004, PubMed:34700328, PubMed:35585232).</text>
</comment>
<comment type="subunit">
    <text evidence="2 3 4 5 7 8 9 10 11">Component of the GINS complex which is a heterotetramer of GINS1, GINS2, GINS3 and GINS4. Forms a stable subcomplex with GINS1. GINS complex interacts with DNA primase in vitro (PubMed:17170760, PubMed:17417653, PubMed:17545466, PubMed:17557111, PubMed:17652513, PubMed:28414293, PubMed:32453425). Component of the CMG helicase complex, a hexameric ring of related MCM2-7 subunits stabilized by CDC45 and the tetrameric GINS complex (PubMed:32453425, PubMed:34694004, PubMed:34700328).</text>
</comment>
<comment type="interaction">
    <interactant intactId="EBI-747500">
        <id>Q9BRT9</id>
    </interactant>
    <interactant intactId="EBI-2653038">
        <id>Q9NQY0</id>
        <label>BIN3</label>
    </interactant>
    <organismsDiffer>false</organismsDiffer>
    <experiments>3</experiments>
</comment>
<comment type="interaction">
    <interactant intactId="EBI-747500">
        <id>Q9BRT9</id>
    </interactant>
    <interactant intactId="EBI-374969">
        <id>O75419</id>
        <label>CDC45</label>
    </interactant>
    <organismsDiffer>false</organismsDiffer>
    <experiments>3</experiments>
</comment>
<comment type="interaction">
    <interactant intactId="EBI-747500">
        <id>Q9BRT9</id>
    </interactant>
    <interactant intactId="EBI-747082">
        <id>Q9NSA3</id>
        <label>CTNNBIP1</label>
    </interactant>
    <organismsDiffer>false</organismsDiffer>
    <experiments>3</experiments>
</comment>
<comment type="interaction">
    <interactant intactId="EBI-747500">
        <id>Q9BRT9</id>
    </interactant>
    <interactant intactId="EBI-399105">
        <id>Q9NPF5</id>
        <label>DMAP1</label>
    </interactant>
    <organismsDiffer>false</organismsDiffer>
    <experiments>3</experiments>
</comment>
<comment type="interaction">
    <interactant intactId="EBI-747500">
        <id>Q9BRT9</id>
    </interactant>
    <interactant intactId="EBI-9019496">
        <id>Q14691</id>
        <label>GINS1</label>
    </interactant>
    <organismsDiffer>false</organismsDiffer>
    <experiments>8</experiments>
</comment>
<comment type="interaction">
    <interactant intactId="EBI-747500">
        <id>Q9BRT9</id>
    </interactant>
    <interactant intactId="EBI-747491">
        <id>Q9Y248</id>
        <label>GINS2</label>
    </interactant>
    <organismsDiffer>false</organismsDiffer>
    <experiments>12</experiments>
</comment>
<comment type="interaction">
    <interactant intactId="EBI-747500">
        <id>Q9BRT9</id>
    </interactant>
    <interactant intactId="EBI-10988217">
        <id>Q96L93-6</id>
        <label>KIF16B</label>
    </interactant>
    <organismsDiffer>false</organismsDiffer>
    <experiments>3</experiments>
</comment>
<comment type="interaction">
    <interactant intactId="EBI-747500">
        <id>Q9BRT9</id>
    </interactant>
    <interactant intactId="EBI-8474075">
        <id>Q68G74</id>
        <label>LHX8</label>
    </interactant>
    <organismsDiffer>false</organismsDiffer>
    <experiments>3</experiments>
</comment>
<comment type="interaction">
    <interactant intactId="EBI-747500">
        <id>Q9BRT9</id>
    </interactant>
    <interactant intactId="EBI-749378">
        <id>Q9BTE3</id>
        <label>MCMBP</label>
    </interactant>
    <organismsDiffer>false</organismsDiffer>
    <experiments>2</experiments>
</comment>
<comment type="interaction">
    <interactant intactId="EBI-747500">
        <id>Q9BRT9</id>
    </interactant>
    <interactant intactId="EBI-10302990">
        <id>Q9BYU1</id>
        <label>PBX4</label>
    </interactant>
    <organismsDiffer>false</organismsDiffer>
    <experiments>3</experiments>
</comment>
<comment type="interaction">
    <interactant intactId="EBI-747500">
        <id>Q9BRT9</id>
    </interactant>
    <interactant intactId="EBI-1105153">
        <id>Q96KQ4</id>
        <label>PPP1R13B</label>
    </interactant>
    <organismsDiffer>false</organismsDiffer>
    <experiments>3</experiments>
</comment>
<comment type="interaction">
    <interactant intactId="EBI-747500">
        <id>Q9BRT9</id>
    </interactant>
    <interactant intactId="EBI-22345187">
        <id>A0A0B4J2F2</id>
        <label>SIK1B</label>
    </interactant>
    <organismsDiffer>false</organismsDiffer>
    <experiments>3</experiments>
</comment>
<comment type="subcellular location">
    <subcellularLocation>
        <location evidence="15">Nucleus</location>
    </subcellularLocation>
    <subcellularLocation>
        <location evidence="15">Chromosome</location>
    </subcellularLocation>
    <subcellularLocation>
        <location evidence="1">Cytoplasm</location>
    </subcellularLocation>
    <text evidence="15">Associates with chromatin.</text>
</comment>
<comment type="alternative products">
    <event type="alternative splicing"/>
    <isoform>
        <id>Q9BRT9-1</id>
        <name>1</name>
        <sequence type="displayed"/>
    </isoform>
    <isoform>
        <id>Q9BRT9-2</id>
        <name>2</name>
        <sequence type="described" ref="VSP_032738 VSP_032739"/>
    </isoform>
</comment>
<comment type="induction">
    <text evidence="6">Significantly up-regulated in aggressive melanomas.</text>
</comment>
<comment type="mass spectrometry" mass="98373.0" error="13.0" method="Electrospray" evidence="5">
    <molecule>DNA replication complex GINS protein SLD5</molecule>
    <text>This is the measured mass for the GINS complex.</text>
</comment>
<comment type="similarity">
    <text evidence="14">Belongs to the GINS4/SLD5 family.</text>
</comment>
<feature type="chain" id="PRO_0000327620" description="DNA replication complex GINS protein SLD5">
    <location>
        <begin position="1"/>
        <end position="223"/>
    </location>
</feature>
<feature type="initiator methionine" description="Removed; alternate" evidence="22">
    <location>
        <position position="1"/>
    </location>
</feature>
<feature type="chain" id="PRO_0000421794" description="DNA replication complex GINS protein SLD5, N-terminally processed">
    <location>
        <begin position="2"/>
        <end position="223"/>
    </location>
</feature>
<feature type="region of interest" description="Important for GINS complex assembly">
    <location>
        <begin position="166"/>
        <end position="223"/>
    </location>
</feature>
<feature type="modified residue" description="N-acetylmethionine" evidence="21">
    <location>
        <position position="1"/>
    </location>
</feature>
<feature type="modified residue" description="N-acetylthreonine; in DNA replication complex GINS protein SLD5, N-terminally processed" evidence="22">
    <location>
        <position position="2"/>
    </location>
</feature>
<feature type="modified residue" description="Phosphoserine" evidence="21 22">
    <location>
        <position position="12"/>
    </location>
</feature>
<feature type="modified residue" description="Phosphoserine" evidence="21 22">
    <location>
        <position position="16"/>
    </location>
</feature>
<feature type="splice variant" id="VSP_032738" description="In isoform 2." evidence="13">
    <original>I</original>
    <variation>V</variation>
    <location>
        <position position="100"/>
    </location>
</feature>
<feature type="splice variant" id="VSP_032739" description="In isoform 2." evidence="13">
    <location>
        <begin position="101"/>
        <end position="223"/>
    </location>
</feature>
<feature type="helix" evidence="23">
    <location>
        <begin position="23"/>
        <end position="39"/>
    </location>
</feature>
<feature type="strand" evidence="24">
    <location>
        <begin position="40"/>
        <end position="42"/>
    </location>
</feature>
<feature type="helix" evidence="23">
    <location>
        <begin position="48"/>
        <end position="60"/>
    </location>
</feature>
<feature type="helix" evidence="23">
    <location>
        <begin position="72"/>
        <end position="102"/>
    </location>
</feature>
<feature type="helix" evidence="23">
    <location>
        <begin position="104"/>
        <end position="112"/>
    </location>
</feature>
<feature type="helix" evidence="23">
    <location>
        <begin position="124"/>
        <end position="144"/>
    </location>
</feature>
<feature type="helix" evidence="23">
    <location>
        <begin position="146"/>
        <end position="148"/>
    </location>
</feature>
<feature type="helix" evidence="23">
    <location>
        <begin position="151"/>
        <end position="153"/>
    </location>
</feature>
<feature type="helix" evidence="23">
    <location>
        <begin position="158"/>
        <end position="161"/>
    </location>
</feature>
<feature type="strand" evidence="23">
    <location>
        <begin position="170"/>
        <end position="177"/>
    </location>
</feature>
<feature type="strand" evidence="23">
    <location>
        <begin position="179"/>
        <end position="184"/>
    </location>
</feature>
<feature type="helix" evidence="23">
    <location>
        <begin position="190"/>
        <end position="192"/>
    </location>
</feature>
<feature type="strand" evidence="23">
    <location>
        <begin position="194"/>
        <end position="198"/>
    </location>
</feature>
<feature type="strand" evidence="23">
    <location>
        <begin position="203"/>
        <end position="207"/>
    </location>
</feature>
<feature type="helix" evidence="23">
    <location>
        <begin position="208"/>
        <end position="217"/>
    </location>
</feature>
<feature type="strand" evidence="23">
    <location>
        <begin position="218"/>
        <end position="223"/>
    </location>
</feature>
<protein>
    <recommendedName>
        <fullName>DNA replication complex GINS protein SLD5</fullName>
    </recommendedName>
    <alternativeName>
        <fullName>GINS complex subunit 4</fullName>
    </alternativeName>
    <component>
        <recommendedName>
            <fullName>DNA replication complex GINS protein SLD5, N-terminally processed</fullName>
        </recommendedName>
    </component>
</protein>
<keyword id="KW-0002">3D-structure</keyword>
<keyword id="KW-0007">Acetylation</keyword>
<keyword id="KW-0025">Alternative splicing</keyword>
<keyword id="KW-0158">Chromosome</keyword>
<keyword id="KW-0963">Cytoplasm</keyword>
<keyword id="KW-0235">DNA replication</keyword>
<keyword id="KW-0539">Nucleus</keyword>
<keyword id="KW-0597">Phosphoprotein</keyword>
<keyword id="KW-1267">Proteomics identification</keyword>
<keyword id="KW-1185">Reference proteome</keyword>
<name>SLD5_HUMAN</name>
<organism>
    <name type="scientific">Homo sapiens</name>
    <name type="common">Human</name>
    <dbReference type="NCBI Taxonomy" id="9606"/>
    <lineage>
        <taxon>Eukaryota</taxon>
        <taxon>Metazoa</taxon>
        <taxon>Chordata</taxon>
        <taxon>Craniata</taxon>
        <taxon>Vertebrata</taxon>
        <taxon>Euteleostomi</taxon>
        <taxon>Mammalia</taxon>
        <taxon>Eutheria</taxon>
        <taxon>Euarchontoglires</taxon>
        <taxon>Primates</taxon>
        <taxon>Haplorrhini</taxon>
        <taxon>Catarrhini</taxon>
        <taxon>Hominidae</taxon>
        <taxon>Homo</taxon>
    </lineage>
</organism>
<proteinExistence type="evidence at protein level"/>
<sequence length="223" mass="26047">MTEEVDFLGQDSDGGSEEVVLTPAELIERLEQAWMNEKFAPELLESKPEIVECVMEQLEHMEENLRRAKREDLKVSIHQMEMERIRYVLSSYLRCRLMKIEKFFPHVLEKEKTRPEGEPSSLSPEELAFAREFMANTESYLKNVALKHMPPNLQKVDLFRAVPKPDLDSYVFLRVRERQENILVEPDTDEQRDYVIDLEKGSQHLIRYKTIAPLVASGAVQLI</sequence>
<evidence type="ECO:0000250" key="1">
    <source>
        <dbReference type="UniProtKB" id="Q99LZ3"/>
    </source>
</evidence>
<evidence type="ECO:0000269" key="2">
    <source>
    </source>
</evidence>
<evidence type="ECO:0000269" key="3">
    <source>
    </source>
</evidence>
<evidence type="ECO:0000269" key="4">
    <source>
    </source>
</evidence>
<evidence type="ECO:0000269" key="5">
    <source>
    </source>
</evidence>
<evidence type="ECO:0000269" key="6">
    <source>
    </source>
</evidence>
<evidence type="ECO:0000269" key="7">
    <source>
    </source>
</evidence>
<evidence type="ECO:0000269" key="8">
    <source>
    </source>
</evidence>
<evidence type="ECO:0000269" key="9">
    <source>
    </source>
</evidence>
<evidence type="ECO:0000269" key="10">
    <source>
    </source>
</evidence>
<evidence type="ECO:0000269" key="11">
    <source>
    </source>
</evidence>
<evidence type="ECO:0000269" key="12">
    <source>
    </source>
</evidence>
<evidence type="ECO:0000303" key="13">
    <source>
    </source>
</evidence>
<evidence type="ECO:0000305" key="14"/>
<evidence type="ECO:0000305" key="15">
    <source>
    </source>
</evidence>
<evidence type="ECO:0000312" key="16">
    <source>
        <dbReference type="HGNC" id="HGNC:28226"/>
    </source>
</evidence>
<evidence type="ECO:0007744" key="17">
    <source>
        <dbReference type="PDB" id="6XTX"/>
    </source>
</evidence>
<evidence type="ECO:0007744" key="18">
    <source>
        <dbReference type="PDB" id="6XTY"/>
    </source>
</evidence>
<evidence type="ECO:0007744" key="19">
    <source>
        <dbReference type="PDB" id="7PFO"/>
    </source>
</evidence>
<evidence type="ECO:0007744" key="20">
    <source>
        <dbReference type="PDB" id="7PLO"/>
    </source>
</evidence>
<evidence type="ECO:0007744" key="21">
    <source>
    </source>
</evidence>
<evidence type="ECO:0007744" key="22">
    <source>
    </source>
</evidence>
<evidence type="ECO:0007829" key="23">
    <source>
        <dbReference type="PDB" id="2E9X"/>
    </source>
</evidence>
<evidence type="ECO:0007829" key="24">
    <source>
        <dbReference type="PDB" id="2EHO"/>
    </source>
</evidence>
<dbReference type="EMBL" id="AK095334">
    <property type="protein sequence ID" value="BAG53029.1"/>
    <property type="molecule type" value="mRNA"/>
</dbReference>
<dbReference type="EMBL" id="AK313373">
    <property type="protein sequence ID" value="BAG36172.1"/>
    <property type="molecule type" value="mRNA"/>
</dbReference>
<dbReference type="EMBL" id="CH471080">
    <property type="protein sequence ID" value="EAW63256.1"/>
    <property type="molecule type" value="Genomic_DNA"/>
</dbReference>
<dbReference type="EMBL" id="CH471080">
    <property type="protein sequence ID" value="EAW63257.1"/>
    <property type="molecule type" value="Genomic_DNA"/>
</dbReference>
<dbReference type="EMBL" id="BC005995">
    <property type="protein sequence ID" value="AAH05995.1"/>
    <property type="molecule type" value="mRNA"/>
</dbReference>
<dbReference type="EMBL" id="BC027454">
    <property type="protein sequence ID" value="AAH27454.1"/>
    <property type="molecule type" value="mRNA"/>
</dbReference>
<dbReference type="CCDS" id="CCDS6116.1">
    <molecule id="Q9BRT9-1"/>
</dbReference>
<dbReference type="RefSeq" id="NP_115712.1">
    <molecule id="Q9BRT9-1"/>
    <property type="nucleotide sequence ID" value="NM_032336.3"/>
</dbReference>
<dbReference type="RefSeq" id="XP_005273716.1">
    <molecule id="Q9BRT9-1"/>
    <property type="nucleotide sequence ID" value="XM_005273659.5"/>
</dbReference>
<dbReference type="RefSeq" id="XP_054217327.1">
    <molecule id="Q9BRT9-1"/>
    <property type="nucleotide sequence ID" value="XM_054361352.1"/>
</dbReference>
<dbReference type="PDB" id="2E9X">
    <property type="method" value="X-ray"/>
    <property type="resolution" value="2.30 A"/>
    <property type="chains" value="D/H=1-223"/>
</dbReference>
<dbReference type="PDB" id="2EHO">
    <property type="method" value="X-ray"/>
    <property type="resolution" value="3.00 A"/>
    <property type="chains" value="A/E/I=11-213"/>
</dbReference>
<dbReference type="PDB" id="2Q9Q">
    <property type="method" value="X-ray"/>
    <property type="resolution" value="2.36 A"/>
    <property type="chains" value="B/F=1-223"/>
</dbReference>
<dbReference type="PDB" id="6XTX">
    <property type="method" value="EM"/>
    <property type="resolution" value="3.29 A"/>
    <property type="chains" value="D=1-223"/>
</dbReference>
<dbReference type="PDB" id="6XTY">
    <property type="method" value="EM"/>
    <property type="resolution" value="6.77 A"/>
    <property type="chains" value="D=1-223"/>
</dbReference>
<dbReference type="PDB" id="7PFO">
    <property type="method" value="EM"/>
    <property type="resolution" value="3.20 A"/>
    <property type="chains" value="G=1-223"/>
</dbReference>
<dbReference type="PDB" id="7PLO">
    <property type="method" value="EM"/>
    <property type="resolution" value="2.80 A"/>
    <property type="chains" value="G=1-223"/>
</dbReference>
<dbReference type="PDB" id="8B9D">
    <property type="method" value="EM"/>
    <property type="resolution" value="3.40 A"/>
    <property type="chains" value="G=1-223"/>
</dbReference>
<dbReference type="PDB" id="8OK2">
    <property type="method" value="EM"/>
    <property type="resolution" value="4.10 A"/>
    <property type="chains" value="D=1-223"/>
</dbReference>
<dbReference type="PDBsum" id="2E9X"/>
<dbReference type="PDBsum" id="2EHO"/>
<dbReference type="PDBsum" id="2Q9Q"/>
<dbReference type="PDBsum" id="6XTX"/>
<dbReference type="PDBsum" id="6XTY"/>
<dbReference type="PDBsum" id="7PFO"/>
<dbReference type="PDBsum" id="7PLO"/>
<dbReference type="PDBsum" id="8B9D"/>
<dbReference type="PDBsum" id="8OK2"/>
<dbReference type="EMDB" id="EMD-10619"/>
<dbReference type="EMDB" id="EMD-10621"/>
<dbReference type="EMDB" id="EMD-13375"/>
<dbReference type="EMDB" id="EMD-13494"/>
<dbReference type="EMDB" id="EMD-16916"/>
<dbReference type="SMR" id="Q9BRT9"/>
<dbReference type="BioGRID" id="124023">
    <property type="interactions" value="84"/>
</dbReference>
<dbReference type="ComplexPortal" id="CPX-787">
    <property type="entry name" value="GINS complex"/>
</dbReference>
<dbReference type="CORUM" id="Q9BRT9"/>
<dbReference type="DIP" id="DIP-29334N"/>
<dbReference type="FunCoup" id="Q9BRT9">
    <property type="interactions" value="2078"/>
</dbReference>
<dbReference type="IntAct" id="Q9BRT9">
    <property type="interactions" value="36"/>
</dbReference>
<dbReference type="MINT" id="Q9BRT9"/>
<dbReference type="STRING" id="9606.ENSP00000276533"/>
<dbReference type="GlyGen" id="Q9BRT9">
    <property type="glycosylation" value="1 site, 1 O-linked glycan (1 site)"/>
</dbReference>
<dbReference type="iPTMnet" id="Q9BRT9"/>
<dbReference type="PhosphoSitePlus" id="Q9BRT9"/>
<dbReference type="BioMuta" id="GINS4"/>
<dbReference type="DMDM" id="74732928"/>
<dbReference type="jPOST" id="Q9BRT9"/>
<dbReference type="MassIVE" id="Q9BRT9"/>
<dbReference type="PaxDb" id="9606-ENSP00000276533"/>
<dbReference type="PeptideAtlas" id="Q9BRT9"/>
<dbReference type="ProteomicsDB" id="78835">
    <molecule id="Q9BRT9-1"/>
</dbReference>
<dbReference type="ProteomicsDB" id="78836">
    <molecule id="Q9BRT9-2"/>
</dbReference>
<dbReference type="Pumba" id="Q9BRT9"/>
<dbReference type="Antibodypedia" id="11239">
    <property type="antibodies" value="109 antibodies from 24 providers"/>
</dbReference>
<dbReference type="DNASU" id="84296"/>
<dbReference type="Ensembl" id="ENST00000276533.4">
    <molecule id="Q9BRT9-1"/>
    <property type="protein sequence ID" value="ENSP00000276533.3"/>
    <property type="gene ID" value="ENSG00000147536.12"/>
</dbReference>
<dbReference type="Ensembl" id="ENST00000518671.5">
    <molecule id="Q9BRT9-1"/>
    <property type="protein sequence ID" value="ENSP00000428754.1"/>
    <property type="gene ID" value="ENSG00000147536.12"/>
</dbReference>
<dbReference type="Ensembl" id="ENST00000520710.5">
    <molecule id="Q9BRT9-2"/>
    <property type="protein sequence ID" value="ENSP00000429581.1"/>
    <property type="gene ID" value="ENSG00000147536.12"/>
</dbReference>
<dbReference type="GeneID" id="84296"/>
<dbReference type="KEGG" id="hsa:84296"/>
<dbReference type="MANE-Select" id="ENST00000276533.4">
    <property type="protein sequence ID" value="ENSP00000276533.3"/>
    <property type="RefSeq nucleotide sequence ID" value="NM_032336.3"/>
    <property type="RefSeq protein sequence ID" value="NP_115712.1"/>
</dbReference>
<dbReference type="UCSC" id="uc003xnx.3">
    <molecule id="Q9BRT9-1"/>
    <property type="organism name" value="human"/>
</dbReference>
<dbReference type="AGR" id="HGNC:28226"/>
<dbReference type="CTD" id="84296"/>
<dbReference type="DisGeNET" id="84296"/>
<dbReference type="GeneCards" id="GINS4"/>
<dbReference type="HGNC" id="HGNC:28226">
    <property type="gene designation" value="GINS4"/>
</dbReference>
<dbReference type="HPA" id="ENSG00000147536">
    <property type="expression patterns" value="Tissue enhanced (bone marrow, lymphoid tissue)"/>
</dbReference>
<dbReference type="MIM" id="610611">
    <property type="type" value="gene"/>
</dbReference>
<dbReference type="neXtProt" id="NX_Q9BRT9"/>
<dbReference type="OpenTargets" id="ENSG00000147536"/>
<dbReference type="PharmGKB" id="PA145008337"/>
<dbReference type="VEuPathDB" id="HostDB:ENSG00000147536"/>
<dbReference type="eggNOG" id="KOG3176">
    <property type="taxonomic scope" value="Eukaryota"/>
</dbReference>
<dbReference type="GeneTree" id="ENSGT00390000003246"/>
<dbReference type="HOGENOM" id="CLU_2252901_0_0_1"/>
<dbReference type="InParanoid" id="Q9BRT9"/>
<dbReference type="OMA" id="ILETAWI"/>
<dbReference type="OrthoDB" id="338231at2759"/>
<dbReference type="PAN-GO" id="Q9BRT9">
    <property type="GO annotations" value="2 GO annotations based on evolutionary models"/>
</dbReference>
<dbReference type="PhylomeDB" id="Q9BRT9"/>
<dbReference type="TreeFam" id="TF105863"/>
<dbReference type="PathwayCommons" id="Q9BRT9"/>
<dbReference type="Reactome" id="R-HSA-176974">
    <property type="pathway name" value="Unwinding of DNA"/>
</dbReference>
<dbReference type="SignaLink" id="Q9BRT9"/>
<dbReference type="BioGRID-ORCS" id="84296">
    <property type="hits" value="797 hits in 1176 CRISPR screens"/>
</dbReference>
<dbReference type="ChiTaRS" id="GINS4">
    <property type="organism name" value="human"/>
</dbReference>
<dbReference type="EvolutionaryTrace" id="Q9BRT9"/>
<dbReference type="GenomeRNAi" id="84296"/>
<dbReference type="Pharos" id="Q9BRT9">
    <property type="development level" value="Tbio"/>
</dbReference>
<dbReference type="PRO" id="PR:Q9BRT9"/>
<dbReference type="Proteomes" id="UP000005640">
    <property type="component" value="Chromosome 8"/>
</dbReference>
<dbReference type="RNAct" id="Q9BRT9">
    <property type="molecule type" value="protein"/>
</dbReference>
<dbReference type="Bgee" id="ENSG00000147536">
    <property type="expression patterns" value="Expressed in oocyte and 107 other cell types or tissues"/>
</dbReference>
<dbReference type="ExpressionAtlas" id="Q9BRT9">
    <property type="expression patterns" value="baseline and differential"/>
</dbReference>
<dbReference type="GO" id="GO:0071162">
    <property type="term" value="C:CMG complex"/>
    <property type="evidence" value="ECO:0000353"/>
    <property type="project" value="ComplexPortal"/>
</dbReference>
<dbReference type="GO" id="GO:0005737">
    <property type="term" value="C:cytoplasm"/>
    <property type="evidence" value="ECO:0007669"/>
    <property type="project" value="UniProtKB-SubCell"/>
</dbReference>
<dbReference type="GO" id="GO:0000811">
    <property type="term" value="C:GINS complex"/>
    <property type="evidence" value="ECO:0000353"/>
    <property type="project" value="ComplexPortal"/>
</dbReference>
<dbReference type="GO" id="GO:0005654">
    <property type="term" value="C:nucleoplasm"/>
    <property type="evidence" value="ECO:0000304"/>
    <property type="project" value="Reactome"/>
</dbReference>
<dbReference type="GO" id="GO:0005634">
    <property type="term" value="C:nucleus"/>
    <property type="evidence" value="ECO:0000314"/>
    <property type="project" value="ComplexPortal"/>
</dbReference>
<dbReference type="GO" id="GO:0006261">
    <property type="term" value="P:DNA-templated DNA replication"/>
    <property type="evidence" value="ECO:0007669"/>
    <property type="project" value="InterPro"/>
</dbReference>
<dbReference type="GO" id="GO:0000727">
    <property type="term" value="P:double-strand break repair via break-induced replication"/>
    <property type="evidence" value="ECO:0000318"/>
    <property type="project" value="GO_Central"/>
</dbReference>
<dbReference type="GO" id="GO:0001833">
    <property type="term" value="P:inner cell mass cell proliferation"/>
    <property type="evidence" value="ECO:0007669"/>
    <property type="project" value="Ensembl"/>
</dbReference>
<dbReference type="CDD" id="cd11711">
    <property type="entry name" value="GINS_A_Sld5"/>
    <property type="match status" value="1"/>
</dbReference>
<dbReference type="CDD" id="cd21692">
    <property type="entry name" value="GINS_B_Sld5"/>
    <property type="match status" value="1"/>
</dbReference>
<dbReference type="FunFam" id="1.20.58.1030:FF:000002">
    <property type="entry name" value="DNA replication complex GINS protein SLD5"/>
    <property type="match status" value="1"/>
</dbReference>
<dbReference type="FunFam" id="3.40.5.60:FF:000001">
    <property type="entry name" value="DNA replication complex GINS protein SLD5"/>
    <property type="match status" value="1"/>
</dbReference>
<dbReference type="Gene3D" id="1.20.58.1030">
    <property type="match status" value="1"/>
</dbReference>
<dbReference type="Gene3D" id="3.40.5.60">
    <property type="match status" value="1"/>
</dbReference>
<dbReference type="InterPro" id="IPR021151">
    <property type="entry name" value="GINS_A"/>
</dbReference>
<dbReference type="InterPro" id="IPR036224">
    <property type="entry name" value="GINS_bundle-like_dom_sf"/>
</dbReference>
<dbReference type="InterPro" id="IPR008591">
    <property type="entry name" value="GINS_Sld5"/>
</dbReference>
<dbReference type="InterPro" id="IPR031633">
    <property type="entry name" value="SLD5_C"/>
</dbReference>
<dbReference type="InterPro" id="IPR038749">
    <property type="entry name" value="Sld5_GINS_A"/>
</dbReference>
<dbReference type="PANTHER" id="PTHR21206:SF0">
    <property type="entry name" value="DNA REPLICATION COMPLEX GINS PROTEIN SLD5"/>
    <property type="match status" value="1"/>
</dbReference>
<dbReference type="PANTHER" id="PTHR21206">
    <property type="entry name" value="SLD5 PROTEIN"/>
    <property type="match status" value="1"/>
</dbReference>
<dbReference type="Pfam" id="PF05916">
    <property type="entry name" value="Sld5"/>
    <property type="match status" value="1"/>
</dbReference>
<dbReference type="Pfam" id="PF16922">
    <property type="entry name" value="SLD5_C"/>
    <property type="match status" value="1"/>
</dbReference>
<dbReference type="PIRSF" id="PIRSF007764">
    <property type="entry name" value="Sld5"/>
    <property type="match status" value="1"/>
</dbReference>
<dbReference type="SUPFAM" id="SSF158573">
    <property type="entry name" value="GINS helical bundle-like"/>
    <property type="match status" value="1"/>
</dbReference>
<dbReference type="SUPFAM" id="SSF160059">
    <property type="entry name" value="PriA/YqbF domain"/>
    <property type="match status" value="1"/>
</dbReference>
<gene>
    <name evidence="16" type="primary">GINS4</name>
    <name type="synonym">SLD5</name>
</gene>
<reference key="1">
    <citation type="journal article" date="2004" name="Nat. Genet.">
        <title>Complete sequencing and characterization of 21,243 full-length human cDNAs.</title>
        <authorList>
            <person name="Ota T."/>
            <person name="Suzuki Y."/>
            <person name="Nishikawa T."/>
            <person name="Otsuki T."/>
            <person name="Sugiyama T."/>
            <person name="Irie R."/>
            <person name="Wakamatsu A."/>
            <person name="Hayashi K."/>
            <person name="Sato H."/>
            <person name="Nagai K."/>
            <person name="Kimura K."/>
            <person name="Makita H."/>
            <person name="Sekine M."/>
            <person name="Obayashi M."/>
            <person name="Nishi T."/>
            <person name="Shibahara T."/>
            <person name="Tanaka T."/>
            <person name="Ishii S."/>
            <person name="Yamamoto J."/>
            <person name="Saito K."/>
            <person name="Kawai Y."/>
            <person name="Isono Y."/>
            <person name="Nakamura Y."/>
            <person name="Nagahari K."/>
            <person name="Murakami K."/>
            <person name="Yasuda T."/>
            <person name="Iwayanagi T."/>
            <person name="Wagatsuma M."/>
            <person name="Shiratori A."/>
            <person name="Sudo H."/>
            <person name="Hosoiri T."/>
            <person name="Kaku Y."/>
            <person name="Kodaira H."/>
            <person name="Kondo H."/>
            <person name="Sugawara M."/>
            <person name="Takahashi M."/>
            <person name="Kanda K."/>
            <person name="Yokoi T."/>
            <person name="Furuya T."/>
            <person name="Kikkawa E."/>
            <person name="Omura Y."/>
            <person name="Abe K."/>
            <person name="Kamihara K."/>
            <person name="Katsuta N."/>
            <person name="Sato K."/>
            <person name="Tanikawa M."/>
            <person name="Yamazaki M."/>
            <person name="Ninomiya K."/>
            <person name="Ishibashi T."/>
            <person name="Yamashita H."/>
            <person name="Murakawa K."/>
            <person name="Fujimori K."/>
            <person name="Tanai H."/>
            <person name="Kimata M."/>
            <person name="Watanabe M."/>
            <person name="Hiraoka S."/>
            <person name="Chiba Y."/>
            <person name="Ishida S."/>
            <person name="Ono Y."/>
            <person name="Takiguchi S."/>
            <person name="Watanabe S."/>
            <person name="Yosida M."/>
            <person name="Hotuta T."/>
            <person name="Kusano J."/>
            <person name="Kanehori K."/>
            <person name="Takahashi-Fujii A."/>
            <person name="Hara H."/>
            <person name="Tanase T.-O."/>
            <person name="Nomura Y."/>
            <person name="Togiya S."/>
            <person name="Komai F."/>
            <person name="Hara R."/>
            <person name="Takeuchi K."/>
            <person name="Arita M."/>
            <person name="Imose N."/>
            <person name="Musashino K."/>
            <person name="Yuuki H."/>
            <person name="Oshima A."/>
            <person name="Sasaki N."/>
            <person name="Aotsuka S."/>
            <person name="Yoshikawa Y."/>
            <person name="Matsunawa H."/>
            <person name="Ichihara T."/>
            <person name="Shiohata N."/>
            <person name="Sano S."/>
            <person name="Moriya S."/>
            <person name="Momiyama H."/>
            <person name="Satoh N."/>
            <person name="Takami S."/>
            <person name="Terashima Y."/>
            <person name="Suzuki O."/>
            <person name="Nakagawa S."/>
            <person name="Senoh A."/>
            <person name="Mizoguchi H."/>
            <person name="Goto Y."/>
            <person name="Shimizu F."/>
            <person name="Wakebe H."/>
            <person name="Hishigaki H."/>
            <person name="Watanabe T."/>
            <person name="Sugiyama A."/>
            <person name="Takemoto M."/>
            <person name="Kawakami B."/>
            <person name="Yamazaki M."/>
            <person name="Watanabe K."/>
            <person name="Kumagai A."/>
            <person name="Itakura S."/>
            <person name="Fukuzumi Y."/>
            <person name="Fujimori Y."/>
            <person name="Komiyama M."/>
            <person name="Tashiro H."/>
            <person name="Tanigami A."/>
            <person name="Fujiwara T."/>
            <person name="Ono T."/>
            <person name="Yamada K."/>
            <person name="Fujii Y."/>
            <person name="Ozaki K."/>
            <person name="Hirao M."/>
            <person name="Ohmori Y."/>
            <person name="Kawabata A."/>
            <person name="Hikiji T."/>
            <person name="Kobatake N."/>
            <person name="Inagaki H."/>
            <person name="Ikema Y."/>
            <person name="Okamoto S."/>
            <person name="Okitani R."/>
            <person name="Kawakami T."/>
            <person name="Noguchi S."/>
            <person name="Itoh T."/>
            <person name="Shigeta K."/>
            <person name="Senba T."/>
            <person name="Matsumura K."/>
            <person name="Nakajima Y."/>
            <person name="Mizuno T."/>
            <person name="Morinaga M."/>
            <person name="Sasaki M."/>
            <person name="Togashi T."/>
            <person name="Oyama M."/>
            <person name="Hata H."/>
            <person name="Watanabe M."/>
            <person name="Komatsu T."/>
            <person name="Mizushima-Sugano J."/>
            <person name="Satoh T."/>
            <person name="Shirai Y."/>
            <person name="Takahashi Y."/>
            <person name="Nakagawa K."/>
            <person name="Okumura K."/>
            <person name="Nagase T."/>
            <person name="Nomura N."/>
            <person name="Kikuchi H."/>
            <person name="Masuho Y."/>
            <person name="Yamashita R."/>
            <person name="Nakai K."/>
            <person name="Yada T."/>
            <person name="Nakamura Y."/>
            <person name="Ohara O."/>
            <person name="Isogai T."/>
            <person name="Sugano S."/>
        </authorList>
    </citation>
    <scope>NUCLEOTIDE SEQUENCE [LARGE SCALE MRNA] (ISOFORM 1)</scope>
    <source>
        <tissue>Thymus</tissue>
        <tissue>Tongue</tissue>
    </source>
</reference>
<reference key="2">
    <citation type="submission" date="2005-09" db="EMBL/GenBank/DDBJ databases">
        <authorList>
            <person name="Mural R.J."/>
            <person name="Istrail S."/>
            <person name="Sutton G.G."/>
            <person name="Florea L."/>
            <person name="Halpern A.L."/>
            <person name="Mobarry C.M."/>
            <person name="Lippert R."/>
            <person name="Walenz B."/>
            <person name="Shatkay H."/>
            <person name="Dew I."/>
            <person name="Miller J.R."/>
            <person name="Flanigan M.J."/>
            <person name="Edwards N.J."/>
            <person name="Bolanos R."/>
            <person name="Fasulo D."/>
            <person name="Halldorsson B.V."/>
            <person name="Hannenhalli S."/>
            <person name="Turner R."/>
            <person name="Yooseph S."/>
            <person name="Lu F."/>
            <person name="Nusskern D.R."/>
            <person name="Shue B.C."/>
            <person name="Zheng X.H."/>
            <person name="Zhong F."/>
            <person name="Delcher A.L."/>
            <person name="Huson D.H."/>
            <person name="Kravitz S.A."/>
            <person name="Mouchard L."/>
            <person name="Reinert K."/>
            <person name="Remington K.A."/>
            <person name="Clark A.G."/>
            <person name="Waterman M.S."/>
            <person name="Eichler E.E."/>
            <person name="Adams M.D."/>
            <person name="Hunkapiller M.W."/>
            <person name="Myers E.W."/>
            <person name="Venter J.C."/>
        </authorList>
    </citation>
    <scope>NUCLEOTIDE SEQUENCE [LARGE SCALE GENOMIC DNA]</scope>
</reference>
<reference key="3">
    <citation type="journal article" date="2004" name="Genome Res.">
        <title>The status, quality, and expansion of the NIH full-length cDNA project: the Mammalian Gene Collection (MGC).</title>
        <authorList>
            <consortium name="The MGC Project Team"/>
        </authorList>
    </citation>
    <scope>NUCLEOTIDE SEQUENCE [LARGE SCALE MRNA] (ISOFORMS 1 AND 2)</scope>
    <source>
        <tissue>Kidney</tissue>
        <tissue>Placenta</tissue>
    </source>
</reference>
<reference key="4">
    <citation type="journal article" date="2007" name="EMBO Rep.">
        <title>The human GINS complex binds to and specifically stimulates human DNA polymerase alpha-primase.</title>
        <authorList>
            <person name="De Falco M."/>
            <person name="Ferrari E."/>
            <person name="De Felice M."/>
            <person name="Rossi M."/>
            <person name="Hubscher U."/>
            <person name="Pisani F.M."/>
        </authorList>
    </citation>
    <scope>SUBUNIT</scope>
    <scope>INTERACTION WITH DNA PRIMASE</scope>
</reference>
<reference key="5">
    <citation type="journal article" date="2007" name="PLoS ONE">
        <title>Comprehensive expression profiling of tumor cell lines identifies molecular signatures of melanoma progression.</title>
        <authorList>
            <person name="Ryu B."/>
            <person name="Kim D.S."/>
            <person name="Deluca A.M."/>
            <person name="Alani R.M."/>
        </authorList>
    </citation>
    <scope>INDUCTION</scope>
</reference>
<reference key="6">
    <citation type="journal article" date="2010" name="Sci. Signal.">
        <title>Quantitative phosphoproteomics reveals widespread full phosphorylation site occupancy during mitosis.</title>
        <authorList>
            <person name="Olsen J.V."/>
            <person name="Vermeulen M."/>
            <person name="Santamaria A."/>
            <person name="Kumar C."/>
            <person name="Miller M.L."/>
            <person name="Jensen L.J."/>
            <person name="Gnad F."/>
            <person name="Cox J."/>
            <person name="Jensen T.S."/>
            <person name="Nigg E.A."/>
            <person name="Brunak S."/>
            <person name="Mann M."/>
        </authorList>
    </citation>
    <scope>ACETYLATION [LARGE SCALE ANALYSIS] AT MET-1</scope>
    <scope>PHOSPHORYLATION [LARGE SCALE ANALYSIS] AT SER-12 AND SER-16</scope>
    <scope>IDENTIFICATION BY MASS SPECTROMETRY [LARGE SCALE ANALYSIS]</scope>
    <source>
        <tissue>Cervix carcinoma</tissue>
    </source>
</reference>
<reference key="7">
    <citation type="journal article" date="2011" name="BMC Syst. Biol.">
        <title>Initial characterization of the human central proteome.</title>
        <authorList>
            <person name="Burkard T.R."/>
            <person name="Planyavsky M."/>
            <person name="Kaupe I."/>
            <person name="Breitwieser F.P."/>
            <person name="Buerckstuemmer T."/>
            <person name="Bennett K.L."/>
            <person name="Superti-Furga G."/>
            <person name="Colinge J."/>
        </authorList>
    </citation>
    <scope>IDENTIFICATION BY MASS SPECTROMETRY [LARGE SCALE ANALYSIS]</scope>
</reference>
<reference key="8">
    <citation type="journal article" date="2011" name="Sci. Signal.">
        <title>System-wide temporal characterization of the proteome and phosphoproteome of human embryonic stem cell differentiation.</title>
        <authorList>
            <person name="Rigbolt K.T."/>
            <person name="Prokhorova T.A."/>
            <person name="Akimov V."/>
            <person name="Henningsen J."/>
            <person name="Johansen P.T."/>
            <person name="Kratchmarova I."/>
            <person name="Kassem M."/>
            <person name="Mann M."/>
            <person name="Olsen J.V."/>
            <person name="Blagoev B."/>
        </authorList>
    </citation>
    <scope>ACETYLATION [LARGE SCALE ANALYSIS] AT THR-2</scope>
    <scope>PHOSPHORYLATION [LARGE SCALE ANALYSIS] AT SER-12 AND SER-16</scope>
    <scope>CLEAVAGE OF INITIATOR METHIONINE [LARGE SCALE ANALYSIS]</scope>
    <scope>IDENTIFICATION BY MASS SPECTROMETRY [LARGE SCALE ANALYSIS]</scope>
</reference>
<reference key="9">
    <citation type="journal article" date="2017" name="J. Clin. Invest.">
        <title>Inherited GINS1 deficiency underlies growth retardation along with neutropenia and NK cell deficiency.</title>
        <authorList>
            <person name="Cottineau J."/>
            <person name="Kottemann M.C."/>
            <person name="Lach F.P."/>
            <person name="Kang Y.H."/>
            <person name="Vely F."/>
            <person name="Deenick E.K."/>
            <person name="Lazarov T."/>
            <person name="Gineau L."/>
            <person name="Wang Y."/>
            <person name="Farina A."/>
            <person name="Chansel M."/>
            <person name="Lorenzo L."/>
            <person name="Piperoglou C."/>
            <person name="Ma C.S."/>
            <person name="Nitschke P."/>
            <person name="Belkadi A."/>
            <person name="Itan Y."/>
            <person name="Boisson B."/>
            <person name="Jabot-Hanin F."/>
            <person name="Picard C."/>
            <person name="Bustamante J."/>
            <person name="Eidenschenk C."/>
            <person name="Boucherit S."/>
            <person name="Aladjidi N."/>
            <person name="Lacombe D."/>
            <person name="Barat P."/>
            <person name="Qasim W."/>
            <person name="Hurst J.A."/>
            <person name="Pollard A.J."/>
            <person name="Uhlig H.H."/>
            <person name="Fieschi C."/>
            <person name="Michon J."/>
            <person name="Bermudez V.P."/>
            <person name="Abel L."/>
            <person name="de Villartay J.P."/>
            <person name="Geissmann F."/>
            <person name="Tangye S.G."/>
            <person name="Hurwitz J."/>
            <person name="Vivier E."/>
            <person name="Casanova J.L."/>
            <person name="Smogorzewska A."/>
            <person name="Jouanguy E."/>
        </authorList>
    </citation>
    <scope>INTERACTION WITH GINS1</scope>
</reference>
<reference key="10">
    <citation type="journal article" date="2022" name="Nature">
        <title>Fast and efficient DNA replication with purified human proteins.</title>
        <authorList>
            <person name="Baris Y."/>
            <person name="Taylor M.R.G."/>
            <person name="Aria V."/>
            <person name="Yeeles J.T.P."/>
        </authorList>
    </citation>
    <scope>FUNCTION</scope>
    <scope>SUBCELLULAR LOCATION</scope>
</reference>
<reference key="11">
    <citation type="journal article" date="2007" name="EMBO Rep.">
        <title>Molecular architecture of the human GINS complex.</title>
        <authorList>
            <person name="Boskovic J."/>
            <person name="Coloma J."/>
            <person name="Aparicio T."/>
            <person name="Zhou M."/>
            <person name="Robinson C.V."/>
            <person name="Mendez J."/>
            <person name="Montoya G."/>
        </authorList>
    </citation>
    <scope>STRUCTURE BY ELECTRON MICROSCOPY (33 ANGSTROMS) IN COMPLEX WITH GINS1; GINS2 AND GINS3</scope>
    <scope>SUBUNIT</scope>
    <scope>MASS SPECTROMETRY OF GINS COMPLEX</scope>
</reference>
<reference key="12">
    <citation type="journal article" date="2007" name="Genes Dev.">
        <title>Crystal structure of the human GINS complex.</title>
        <authorList>
            <person name="Choi J.M."/>
            <person name="Lim H.S."/>
            <person name="Kim J.J."/>
            <person name="Song O.K."/>
            <person name="Cho Y."/>
        </authorList>
    </citation>
    <scope>X-RAY CRYSTALLOGRAPHY (3.0 ANGSTROMS) OF 11-213 IN COMPLEX WITH GINS1; GINS2 AND GINS3</scope>
    <scope>SUBUNIT</scope>
</reference>
<reference key="13">
    <citation type="journal article" date="2007" name="Nat. Struct. Mol. Biol.">
        <title>Structure of the human GINS complex and its assembly and functional interface in replication initiation.</title>
        <authorList>
            <person name="Kamada K."/>
            <person name="Kubota Y."/>
            <person name="Arata T."/>
            <person name="Shindo Y."/>
            <person name="Hanaoka F."/>
        </authorList>
    </citation>
    <scope>FUNCTION</scope>
    <scope>X-RAY CRYSTALLOGRAPHY (2.3 ANGSTROMS) IN COMPLEX WITH GINS1; GINS2 AND GINS3</scope>
    <scope>SUBUNIT</scope>
    <scope>REGION</scope>
</reference>
<reference key="14">
    <citation type="journal article" date="2007" name="Proc. Natl. Acad. Sci. U.S.A.">
        <title>Crystal structure of the GINS complex and functional insights into its role in DNA replication.</title>
        <authorList>
            <person name="Chang Y.P."/>
            <person name="Wang G."/>
            <person name="Bermudez V."/>
            <person name="Hurwitz J."/>
            <person name="Chen X.S."/>
        </authorList>
    </citation>
    <scope>X-RAY CRYSTALLOGRAPHY (2.36 ANGSTROMS) IN COMPLEX WITH GINS1; GINS2 AND GINS3</scope>
    <scope>SUBUNIT</scope>
</reference>
<reference evidence="17 18" key="15">
    <citation type="journal article" date="2020" name="Nucleic Acids Res.">
        <title>CryoEM structures of human CMG-ATPgammaS-DNA and CMG-AND-1 complexes.</title>
        <authorList>
            <person name="Rzechorzek N.J."/>
            <person name="Hardwick S.W."/>
            <person name="Jatikusumo V.A."/>
            <person name="Chirgadze D.Y."/>
            <person name="Pellegrini L."/>
        </authorList>
    </citation>
    <scope>STRUCTURE BY ELECTRON MICROSCOPY (3.29 ANGSTROMS) IN CMG COMPLEX</scope>
    <scope>SUBUNIT</scope>
    <scope>FUNCTION</scope>
</reference>
<reference evidence="19" key="16">
    <citation type="journal article" date="2021" name="EMBO J.">
        <title>Structure of a human replisome shows the organisation and interactions of a DNA replication machine.</title>
        <authorList>
            <person name="Jones M.L."/>
            <person name="Baris Y."/>
            <person name="Taylor M.R.G."/>
            <person name="Yeeles J.T.P."/>
        </authorList>
    </citation>
    <scope>STRUCTURE BY ELECTRON MICROSCOPY (3.20 ANGSTROMS) IN REPLISOME</scope>
    <scope>SUBUNIT</scope>
    <scope>FUNCTION</scope>
</reference>
<reference evidence="20" key="17">
    <citation type="journal article" date="2021" name="Nature">
        <title>A conserved mechanism for regulating replisome disassembly in eukaryotes.</title>
        <authorList>
            <person name="Jenkyn-Bedford M."/>
            <person name="Jones M.L."/>
            <person name="Baris Y."/>
            <person name="Labib K.P.M."/>
            <person name="Cannone G."/>
            <person name="Yeeles J.T.P."/>
            <person name="Deegan T.D."/>
        </authorList>
    </citation>
    <scope>STRUCTURE BY ELECTRON MICROSCOPY (2.80 ANGSTROMS) IN REPLISOME</scope>
    <scope>SUBUNIT</scope>
    <scope>FUNCTION</scope>
</reference>
<accession>Q9BRT9</accession>
<accession>B2R8H5</accession>
<accession>D3DSY0</accession>
<accession>Q8N648</accession>